<dbReference type="EC" id="2.6.1.9" evidence="1"/>
<dbReference type="EMBL" id="AP009240">
    <property type="protein sequence ID" value="BAG77819.1"/>
    <property type="molecule type" value="Genomic_DNA"/>
</dbReference>
<dbReference type="RefSeq" id="WP_000108941.1">
    <property type="nucleotide sequence ID" value="NC_011415.1"/>
</dbReference>
<dbReference type="SMR" id="B6I848"/>
<dbReference type="KEGG" id="ecy:ECSE_2295"/>
<dbReference type="HOGENOM" id="CLU_017584_3_1_6"/>
<dbReference type="UniPathway" id="UPA00031">
    <property type="reaction ID" value="UER00012"/>
</dbReference>
<dbReference type="Proteomes" id="UP000008199">
    <property type="component" value="Chromosome"/>
</dbReference>
<dbReference type="GO" id="GO:0004400">
    <property type="term" value="F:histidinol-phosphate transaminase activity"/>
    <property type="evidence" value="ECO:0007669"/>
    <property type="project" value="UniProtKB-UniRule"/>
</dbReference>
<dbReference type="GO" id="GO:0030170">
    <property type="term" value="F:pyridoxal phosphate binding"/>
    <property type="evidence" value="ECO:0007669"/>
    <property type="project" value="InterPro"/>
</dbReference>
<dbReference type="GO" id="GO:0000105">
    <property type="term" value="P:L-histidine biosynthetic process"/>
    <property type="evidence" value="ECO:0007669"/>
    <property type="project" value="UniProtKB-UniRule"/>
</dbReference>
<dbReference type="CDD" id="cd00609">
    <property type="entry name" value="AAT_like"/>
    <property type="match status" value="1"/>
</dbReference>
<dbReference type="FunFam" id="3.40.640.10:FF:000032">
    <property type="entry name" value="Histidinol-phosphate aminotransferase"/>
    <property type="match status" value="1"/>
</dbReference>
<dbReference type="FunFam" id="3.90.1150.10:FF:000042">
    <property type="entry name" value="Histidinol-phosphate aminotransferase"/>
    <property type="match status" value="1"/>
</dbReference>
<dbReference type="Gene3D" id="3.90.1150.10">
    <property type="entry name" value="Aspartate Aminotransferase, domain 1"/>
    <property type="match status" value="1"/>
</dbReference>
<dbReference type="Gene3D" id="3.40.640.10">
    <property type="entry name" value="Type I PLP-dependent aspartate aminotransferase-like (Major domain)"/>
    <property type="match status" value="1"/>
</dbReference>
<dbReference type="HAMAP" id="MF_01023">
    <property type="entry name" value="HisC_aminotrans_2"/>
    <property type="match status" value="1"/>
</dbReference>
<dbReference type="InterPro" id="IPR001917">
    <property type="entry name" value="Aminotrans_II_pyridoxalP_BS"/>
</dbReference>
<dbReference type="InterPro" id="IPR004839">
    <property type="entry name" value="Aminotransferase_I/II_large"/>
</dbReference>
<dbReference type="InterPro" id="IPR005861">
    <property type="entry name" value="HisP_aminotrans"/>
</dbReference>
<dbReference type="InterPro" id="IPR015424">
    <property type="entry name" value="PyrdxlP-dep_Trfase"/>
</dbReference>
<dbReference type="InterPro" id="IPR015421">
    <property type="entry name" value="PyrdxlP-dep_Trfase_major"/>
</dbReference>
<dbReference type="InterPro" id="IPR015422">
    <property type="entry name" value="PyrdxlP-dep_Trfase_small"/>
</dbReference>
<dbReference type="NCBIfam" id="TIGR01141">
    <property type="entry name" value="hisC"/>
    <property type="match status" value="1"/>
</dbReference>
<dbReference type="PANTHER" id="PTHR42885:SF2">
    <property type="entry name" value="HISTIDINOL-PHOSPHATE AMINOTRANSFERASE"/>
    <property type="match status" value="1"/>
</dbReference>
<dbReference type="PANTHER" id="PTHR42885">
    <property type="entry name" value="HISTIDINOL-PHOSPHATE AMINOTRANSFERASE-RELATED"/>
    <property type="match status" value="1"/>
</dbReference>
<dbReference type="Pfam" id="PF00155">
    <property type="entry name" value="Aminotran_1_2"/>
    <property type="match status" value="1"/>
</dbReference>
<dbReference type="SUPFAM" id="SSF53383">
    <property type="entry name" value="PLP-dependent transferases"/>
    <property type="match status" value="1"/>
</dbReference>
<dbReference type="PROSITE" id="PS00599">
    <property type="entry name" value="AA_TRANSFER_CLASS_2"/>
    <property type="match status" value="1"/>
</dbReference>
<accession>B6I848</accession>
<reference key="1">
    <citation type="journal article" date="2008" name="DNA Res.">
        <title>Complete genome sequence and comparative analysis of the wild-type commensal Escherichia coli strain SE11 isolated from a healthy adult.</title>
        <authorList>
            <person name="Oshima K."/>
            <person name="Toh H."/>
            <person name="Ogura Y."/>
            <person name="Sasamoto H."/>
            <person name="Morita H."/>
            <person name="Park S.-H."/>
            <person name="Ooka T."/>
            <person name="Iyoda S."/>
            <person name="Taylor T.D."/>
            <person name="Hayashi T."/>
            <person name="Itoh K."/>
            <person name="Hattori M."/>
        </authorList>
    </citation>
    <scope>NUCLEOTIDE SEQUENCE [LARGE SCALE GENOMIC DNA]</scope>
    <source>
        <strain>SE11</strain>
    </source>
</reference>
<organism>
    <name type="scientific">Escherichia coli (strain SE11)</name>
    <dbReference type="NCBI Taxonomy" id="409438"/>
    <lineage>
        <taxon>Bacteria</taxon>
        <taxon>Pseudomonadati</taxon>
        <taxon>Pseudomonadota</taxon>
        <taxon>Gammaproteobacteria</taxon>
        <taxon>Enterobacterales</taxon>
        <taxon>Enterobacteriaceae</taxon>
        <taxon>Escherichia</taxon>
    </lineage>
</organism>
<protein>
    <recommendedName>
        <fullName evidence="1">Histidinol-phosphate aminotransferase</fullName>
        <ecNumber evidence="1">2.6.1.9</ecNumber>
    </recommendedName>
    <alternativeName>
        <fullName evidence="1">Imidazole acetol-phosphate transaminase</fullName>
    </alternativeName>
</protein>
<name>HIS8_ECOSE</name>
<feature type="chain" id="PRO_1000135397" description="Histidinol-phosphate aminotransferase">
    <location>
        <begin position="1"/>
        <end position="356"/>
    </location>
</feature>
<feature type="modified residue" description="N6-(pyridoxal phosphate)lysine" evidence="1">
    <location>
        <position position="214"/>
    </location>
</feature>
<sequence length="356" mass="39360">MSTVTITDLARENVRNLTPYQSARRLGGNGDVWLNANEYPTAVEFQLTQQTLNRYPECQPKAVIENYAQYAGVKPEQVLVSRGADEGIELLIRAFCEPGKDAILYCPPTYGMYSVSAETIGVECRTVPTLDNWQLDLQGISDKLDGVKVVYVCSPNNPTGQLINPQDFRTLLELTRGKAIVVADEAYIEFCPQASLAGWLAEYPHLAILRTLSKAFALAGLRCGFTLANEEVINLLMKVIAPYPLSTPVADIAAQALSPQGIVAMRERVAQIIAEREYLIAALKEIPCVEQVFDSETNYILARFKASSAVFKSLWDQGIILRDQNKQPSLSGCLRITVGTREESQRVIDALRAEQV</sequence>
<proteinExistence type="inferred from homology"/>
<comment type="catalytic activity">
    <reaction evidence="1">
        <text>L-histidinol phosphate + 2-oxoglutarate = 3-(imidazol-4-yl)-2-oxopropyl phosphate + L-glutamate</text>
        <dbReference type="Rhea" id="RHEA:23744"/>
        <dbReference type="ChEBI" id="CHEBI:16810"/>
        <dbReference type="ChEBI" id="CHEBI:29985"/>
        <dbReference type="ChEBI" id="CHEBI:57766"/>
        <dbReference type="ChEBI" id="CHEBI:57980"/>
        <dbReference type="EC" id="2.6.1.9"/>
    </reaction>
</comment>
<comment type="cofactor">
    <cofactor evidence="1">
        <name>pyridoxal 5'-phosphate</name>
        <dbReference type="ChEBI" id="CHEBI:597326"/>
    </cofactor>
</comment>
<comment type="pathway">
    <text evidence="1">Amino-acid biosynthesis; L-histidine biosynthesis; L-histidine from 5-phospho-alpha-D-ribose 1-diphosphate: step 7/9.</text>
</comment>
<comment type="subunit">
    <text evidence="1">Homodimer.</text>
</comment>
<comment type="similarity">
    <text evidence="1">Belongs to the class-II pyridoxal-phosphate-dependent aminotransferase family. Histidinol-phosphate aminotransferase subfamily.</text>
</comment>
<evidence type="ECO:0000255" key="1">
    <source>
        <dbReference type="HAMAP-Rule" id="MF_01023"/>
    </source>
</evidence>
<keyword id="KW-0028">Amino-acid biosynthesis</keyword>
<keyword id="KW-0032">Aminotransferase</keyword>
<keyword id="KW-0368">Histidine biosynthesis</keyword>
<keyword id="KW-0663">Pyridoxal phosphate</keyword>
<keyword id="KW-0808">Transferase</keyword>
<gene>
    <name evidence="1" type="primary">hisC</name>
    <name type="ordered locus">ECSE_2295</name>
</gene>